<protein>
    <recommendedName>
        <fullName>Uncharacterized protein ORF7</fullName>
    </recommendedName>
</protein>
<organism>
    <name type="scientific">Chlamydia phage 1</name>
    <name type="common">Bacteriophage Chp1</name>
    <dbReference type="NCBI Taxonomy" id="2003327"/>
    <lineage>
        <taxon>Viruses</taxon>
        <taxon>Monodnaviria</taxon>
        <taxon>Sangervirae</taxon>
        <taxon>Phixviricota</taxon>
        <taxon>Malgrandaviricetes</taxon>
        <taxon>Petitvirales</taxon>
        <taxon>Microviridae</taxon>
        <taxon>Gokushovirinae</taxon>
        <taxon>Chlamydiamicrovirus</taxon>
    </lineage>
</organism>
<feature type="chain" id="PRO_0000066089" description="Uncharacterized protein ORF7">
    <location>
        <begin position="1"/>
        <end position="31"/>
    </location>
</feature>
<name>ORF7_BPCHP</name>
<organismHost>
    <name type="scientific">Chlamydia psittaci</name>
    <name type="common">Chlamydophila psittaci</name>
    <dbReference type="NCBI Taxonomy" id="83554"/>
</organismHost>
<sequence length="31" mass="3576">MCLLVIKSVMLSIVISLRRLLDYLDLTLQVL</sequence>
<dbReference type="EMBL" id="D00624">
    <property type="protein sequence ID" value="BAA00504.1"/>
    <property type="molecule type" value="Genomic_DNA"/>
</dbReference>
<dbReference type="KEGG" id="vg:1261206"/>
<dbReference type="Proteomes" id="UP000002125">
    <property type="component" value="Genome"/>
</dbReference>
<accession>P19187</accession>
<keyword id="KW-1185">Reference proteome</keyword>
<gene>
    <name type="ORF">ORF7</name>
</gene>
<proteinExistence type="predicted"/>
<reference key="1">
    <citation type="journal article" date="1989" name="J. Gen. Virol.">
        <title>Analysis of the complete nucleotide sequence of Chp1, a phage which infects avian Chlamydia psittaci.</title>
        <authorList>
            <person name="Storey C.C."/>
            <person name="Lusher M."/>
            <person name="Richmond S.J."/>
        </authorList>
    </citation>
    <scope>NUCLEOTIDE SEQUENCE [GENOMIC DNA]</scope>
</reference>